<name>TEX47_RAT</name>
<dbReference type="EMBL" id="BC127528">
    <property type="protein sequence ID" value="AAI27529.1"/>
    <property type="molecule type" value="mRNA"/>
</dbReference>
<dbReference type="RefSeq" id="NP_001071149.1">
    <property type="nucleotide sequence ID" value="NM_001077681.1"/>
</dbReference>
<dbReference type="SMR" id="A0JPP5"/>
<dbReference type="STRING" id="10116.ENSRNOP00000011359"/>
<dbReference type="iPTMnet" id="A0JPP5"/>
<dbReference type="PhosphoSitePlus" id="A0JPP5"/>
<dbReference type="PaxDb" id="10116-ENSRNOP00000011359"/>
<dbReference type="Ensembl" id="ENSRNOT00000011359.5">
    <property type="protein sequence ID" value="ENSRNOP00000011359.2"/>
    <property type="gene ID" value="ENSRNOG00000008594.5"/>
</dbReference>
<dbReference type="GeneID" id="499993"/>
<dbReference type="KEGG" id="rno:499993"/>
<dbReference type="UCSC" id="RGD:1564345">
    <property type="organism name" value="rat"/>
</dbReference>
<dbReference type="AGR" id="RGD:1564345"/>
<dbReference type="CTD" id="219557"/>
<dbReference type="RGD" id="1564345">
    <property type="gene designation" value="Tex47"/>
</dbReference>
<dbReference type="eggNOG" id="ENOG502RYKR">
    <property type="taxonomic scope" value="Eukaryota"/>
</dbReference>
<dbReference type="GeneTree" id="ENSGT00390000005565"/>
<dbReference type="HOGENOM" id="CLU_089495_0_0_1"/>
<dbReference type="InParanoid" id="A0JPP5"/>
<dbReference type="OMA" id="RLFMQWY"/>
<dbReference type="OrthoDB" id="548795at2759"/>
<dbReference type="PhylomeDB" id="A0JPP5"/>
<dbReference type="TreeFam" id="TF329731"/>
<dbReference type="PRO" id="PR:A0JPP5"/>
<dbReference type="Proteomes" id="UP000002494">
    <property type="component" value="Chromosome 4"/>
</dbReference>
<dbReference type="Bgee" id="ENSRNOG00000008594">
    <property type="expression patterns" value="Expressed in testis"/>
</dbReference>
<dbReference type="InterPro" id="IPR055308">
    <property type="entry name" value="TEX47-like"/>
</dbReference>
<dbReference type="PANTHER" id="PTHR34035">
    <property type="entry name" value="TESTIS-EXPRESSED PROTEIN 47"/>
    <property type="match status" value="1"/>
</dbReference>
<dbReference type="PANTHER" id="PTHR34035:SF1">
    <property type="entry name" value="TESTIS-EXPRESSED PROTEIN 47"/>
    <property type="match status" value="1"/>
</dbReference>
<dbReference type="Pfam" id="PF24787">
    <property type="entry name" value="TEX47"/>
    <property type="match status" value="1"/>
</dbReference>
<reference key="1">
    <citation type="journal article" date="2004" name="Genome Res.">
        <title>The status, quality, and expansion of the NIH full-length cDNA project: the Mammalian Gene Collection (MGC).</title>
        <authorList>
            <consortium name="The MGC Project Team"/>
        </authorList>
    </citation>
    <scope>NUCLEOTIDE SEQUENCE [LARGE SCALE MRNA]</scope>
    <source>
        <tissue>Testis</tissue>
    </source>
</reference>
<keyword id="KW-1185">Reference proteome</keyword>
<proteinExistence type="evidence at transcript level"/>
<sequence length="253" mass="29601">MSFIVHNRRSSKKQFQVDPLLMPKVPRINYLHIQEEKHRLQLKKFLLHRLFLVGYIQANTEKKEISEYYEQLFQSILKHHLGEVVTGLFLIYPSSFLHILESSNGTLFRILLDYVAHEKSEREFMIQNMKIIVASHNIPTRLFMQWHISIIKVPVLYLDDDTQSQSVEEVTTDFLTLTHKLALHLYKTVKLGGKGPGDNLHQLAPELILPEKTIKYLCKATEFMDPASFLSMYNRPIHITMDSDIVWPAPSRF</sequence>
<feature type="chain" id="PRO_0000321829" description="Testis-expressed protein 47">
    <location>
        <begin position="1"/>
        <end position="253"/>
    </location>
</feature>
<evidence type="ECO:0000312" key="1">
    <source>
        <dbReference type="RGD" id="1564345"/>
    </source>
</evidence>
<organism>
    <name type="scientific">Rattus norvegicus</name>
    <name type="common">Rat</name>
    <dbReference type="NCBI Taxonomy" id="10116"/>
    <lineage>
        <taxon>Eukaryota</taxon>
        <taxon>Metazoa</taxon>
        <taxon>Chordata</taxon>
        <taxon>Craniata</taxon>
        <taxon>Vertebrata</taxon>
        <taxon>Euteleostomi</taxon>
        <taxon>Mammalia</taxon>
        <taxon>Eutheria</taxon>
        <taxon>Euarchontoglires</taxon>
        <taxon>Glires</taxon>
        <taxon>Rodentia</taxon>
        <taxon>Myomorpha</taxon>
        <taxon>Muroidea</taxon>
        <taxon>Muridae</taxon>
        <taxon>Murinae</taxon>
        <taxon>Rattus</taxon>
    </lineage>
</organism>
<gene>
    <name evidence="1" type="primary">Tex47</name>
</gene>
<accession>A0JPP5</accession>
<protein>
    <recommendedName>
        <fullName>Testis-expressed protein 47</fullName>
    </recommendedName>
</protein>